<reference key="1">
    <citation type="journal article" date="1997" name="Nature">
        <title>The complete genome sequence of the Gram-positive bacterium Bacillus subtilis.</title>
        <authorList>
            <person name="Kunst F."/>
            <person name="Ogasawara N."/>
            <person name="Moszer I."/>
            <person name="Albertini A.M."/>
            <person name="Alloni G."/>
            <person name="Azevedo V."/>
            <person name="Bertero M.G."/>
            <person name="Bessieres P."/>
            <person name="Bolotin A."/>
            <person name="Borchert S."/>
            <person name="Borriss R."/>
            <person name="Boursier L."/>
            <person name="Brans A."/>
            <person name="Braun M."/>
            <person name="Brignell S.C."/>
            <person name="Bron S."/>
            <person name="Brouillet S."/>
            <person name="Bruschi C.V."/>
            <person name="Caldwell B."/>
            <person name="Capuano V."/>
            <person name="Carter N.M."/>
            <person name="Choi S.-K."/>
            <person name="Codani J.-J."/>
            <person name="Connerton I.F."/>
            <person name="Cummings N.J."/>
            <person name="Daniel R.A."/>
            <person name="Denizot F."/>
            <person name="Devine K.M."/>
            <person name="Duesterhoeft A."/>
            <person name="Ehrlich S.D."/>
            <person name="Emmerson P.T."/>
            <person name="Entian K.-D."/>
            <person name="Errington J."/>
            <person name="Fabret C."/>
            <person name="Ferrari E."/>
            <person name="Foulger D."/>
            <person name="Fritz C."/>
            <person name="Fujita M."/>
            <person name="Fujita Y."/>
            <person name="Fuma S."/>
            <person name="Galizzi A."/>
            <person name="Galleron N."/>
            <person name="Ghim S.-Y."/>
            <person name="Glaser P."/>
            <person name="Goffeau A."/>
            <person name="Golightly E.J."/>
            <person name="Grandi G."/>
            <person name="Guiseppi G."/>
            <person name="Guy B.J."/>
            <person name="Haga K."/>
            <person name="Haiech J."/>
            <person name="Harwood C.R."/>
            <person name="Henaut A."/>
            <person name="Hilbert H."/>
            <person name="Holsappel S."/>
            <person name="Hosono S."/>
            <person name="Hullo M.-F."/>
            <person name="Itaya M."/>
            <person name="Jones L.-M."/>
            <person name="Joris B."/>
            <person name="Karamata D."/>
            <person name="Kasahara Y."/>
            <person name="Klaerr-Blanchard M."/>
            <person name="Klein C."/>
            <person name="Kobayashi Y."/>
            <person name="Koetter P."/>
            <person name="Koningstein G."/>
            <person name="Krogh S."/>
            <person name="Kumano M."/>
            <person name="Kurita K."/>
            <person name="Lapidus A."/>
            <person name="Lardinois S."/>
            <person name="Lauber J."/>
            <person name="Lazarevic V."/>
            <person name="Lee S.-M."/>
            <person name="Levine A."/>
            <person name="Liu H."/>
            <person name="Masuda S."/>
            <person name="Mauel C."/>
            <person name="Medigue C."/>
            <person name="Medina N."/>
            <person name="Mellado R.P."/>
            <person name="Mizuno M."/>
            <person name="Moestl D."/>
            <person name="Nakai S."/>
            <person name="Noback M."/>
            <person name="Noone D."/>
            <person name="O'Reilly M."/>
            <person name="Ogawa K."/>
            <person name="Ogiwara A."/>
            <person name="Oudega B."/>
            <person name="Park S.-H."/>
            <person name="Parro V."/>
            <person name="Pohl T.M."/>
            <person name="Portetelle D."/>
            <person name="Porwollik S."/>
            <person name="Prescott A.M."/>
            <person name="Presecan E."/>
            <person name="Pujic P."/>
            <person name="Purnelle B."/>
            <person name="Rapoport G."/>
            <person name="Rey M."/>
            <person name="Reynolds S."/>
            <person name="Rieger M."/>
            <person name="Rivolta C."/>
            <person name="Rocha E."/>
            <person name="Roche B."/>
            <person name="Rose M."/>
            <person name="Sadaie Y."/>
            <person name="Sato T."/>
            <person name="Scanlan E."/>
            <person name="Schleich S."/>
            <person name="Schroeter R."/>
            <person name="Scoffone F."/>
            <person name="Sekiguchi J."/>
            <person name="Sekowska A."/>
            <person name="Seror S.J."/>
            <person name="Serror P."/>
            <person name="Shin B.-S."/>
            <person name="Soldo B."/>
            <person name="Sorokin A."/>
            <person name="Tacconi E."/>
            <person name="Takagi T."/>
            <person name="Takahashi H."/>
            <person name="Takemaru K."/>
            <person name="Takeuchi M."/>
            <person name="Tamakoshi A."/>
            <person name="Tanaka T."/>
            <person name="Terpstra P."/>
            <person name="Tognoni A."/>
            <person name="Tosato V."/>
            <person name="Uchiyama S."/>
            <person name="Vandenbol M."/>
            <person name="Vannier F."/>
            <person name="Vassarotti A."/>
            <person name="Viari A."/>
            <person name="Wambutt R."/>
            <person name="Wedler E."/>
            <person name="Wedler H."/>
            <person name="Weitzenegger T."/>
            <person name="Winters P."/>
            <person name="Wipat A."/>
            <person name="Yamamoto H."/>
            <person name="Yamane K."/>
            <person name="Yasumoto K."/>
            <person name="Yata K."/>
            <person name="Yoshida K."/>
            <person name="Yoshikawa H.-F."/>
            <person name="Zumstein E."/>
            <person name="Yoshikawa H."/>
            <person name="Danchin A."/>
        </authorList>
    </citation>
    <scope>NUCLEOTIDE SEQUENCE [LARGE SCALE GENOMIC DNA]</scope>
    <source>
        <strain>168</strain>
    </source>
</reference>
<sequence>MNQTENKPKNYTGIVLTLTVLINGLIAVLFFMPKLDQFSHANIHILPMLNAIFNSFTFIFLLAALIMIKQKNIKAHKRFILAAFTTTLLFLICYVTYHSIAENTLYGGEGIMRPIYFFILITHICLSAIIVPLALFTLIRGFSMQVERHKKIARWTMPLWLYVSLTGVIVYLMISPYY</sequence>
<dbReference type="EMBL" id="AL009126">
    <property type="protein sequence ID" value="CAB13806.1"/>
    <property type="molecule type" value="Genomic_DNA"/>
</dbReference>
<dbReference type="PIR" id="F69930">
    <property type="entry name" value="F69930"/>
</dbReference>
<dbReference type="RefSeq" id="NP_389795.1">
    <property type="nucleotide sequence ID" value="NC_000964.3"/>
</dbReference>
<dbReference type="RefSeq" id="WP_003231280.1">
    <property type="nucleotide sequence ID" value="NZ_OZ025638.1"/>
</dbReference>
<dbReference type="SMR" id="O31845"/>
<dbReference type="FunCoup" id="O31845">
    <property type="interactions" value="6"/>
</dbReference>
<dbReference type="STRING" id="224308.BSU19140"/>
<dbReference type="PaxDb" id="224308-BSU19140"/>
<dbReference type="EnsemblBacteria" id="CAB13806">
    <property type="protein sequence ID" value="CAB13806"/>
    <property type="gene ID" value="BSU_19140"/>
</dbReference>
<dbReference type="GeneID" id="939655"/>
<dbReference type="KEGG" id="bsu:BSU19140"/>
<dbReference type="PATRIC" id="fig|224308.179.peg.2092"/>
<dbReference type="eggNOG" id="COG2322">
    <property type="taxonomic scope" value="Bacteria"/>
</dbReference>
<dbReference type="InParanoid" id="O31845"/>
<dbReference type="OrthoDB" id="9811380at2"/>
<dbReference type="PhylomeDB" id="O31845"/>
<dbReference type="BioCyc" id="BSUB:BSU19140-MONOMER"/>
<dbReference type="Proteomes" id="UP000001570">
    <property type="component" value="Chromosome"/>
</dbReference>
<dbReference type="GO" id="GO:0005886">
    <property type="term" value="C:plasma membrane"/>
    <property type="evidence" value="ECO:0007669"/>
    <property type="project" value="UniProtKB-SubCell"/>
</dbReference>
<dbReference type="InterPro" id="IPR007352">
    <property type="entry name" value="DUF420"/>
</dbReference>
<dbReference type="PANTHER" id="PTHR37692:SF1">
    <property type="entry name" value="DUF420 DOMAIN-CONTAINING PROTEIN"/>
    <property type="match status" value="1"/>
</dbReference>
<dbReference type="PANTHER" id="PTHR37692">
    <property type="entry name" value="HYPOTHETICAL MEMBRANE SPANNING PROTEIN"/>
    <property type="match status" value="1"/>
</dbReference>
<dbReference type="Pfam" id="PF04238">
    <property type="entry name" value="DUF420"/>
    <property type="match status" value="1"/>
</dbReference>
<keyword id="KW-1003">Cell membrane</keyword>
<keyword id="KW-0472">Membrane</keyword>
<keyword id="KW-1185">Reference proteome</keyword>
<keyword id="KW-0812">Transmembrane</keyword>
<keyword id="KW-1133">Transmembrane helix</keyword>
<feature type="chain" id="PRO_0000387933" description="Uncharacterized membrane protein YozB">
    <location>
        <begin position="1"/>
        <end position="178"/>
    </location>
</feature>
<feature type="transmembrane region" description="Helical" evidence="1">
    <location>
        <begin position="13"/>
        <end position="33"/>
    </location>
</feature>
<feature type="transmembrane region" description="Helical" evidence="1">
    <location>
        <begin position="48"/>
        <end position="68"/>
    </location>
</feature>
<feature type="transmembrane region" description="Helical" evidence="1">
    <location>
        <begin position="80"/>
        <end position="100"/>
    </location>
</feature>
<feature type="transmembrane region" description="Helical" evidence="1">
    <location>
        <begin position="115"/>
        <end position="135"/>
    </location>
</feature>
<feature type="transmembrane region" description="Helical" evidence="1">
    <location>
        <begin position="155"/>
        <end position="175"/>
    </location>
</feature>
<protein>
    <recommendedName>
        <fullName>Uncharacterized membrane protein YozB</fullName>
    </recommendedName>
</protein>
<comment type="subcellular location">
    <subcellularLocation>
        <location evidence="2">Cell membrane</location>
        <topology evidence="2">Multi-pass membrane protein</topology>
    </subcellularLocation>
</comment>
<gene>
    <name type="primary">yozB</name>
    <name type="ordered locus">BSU19140</name>
</gene>
<proteinExistence type="predicted"/>
<evidence type="ECO:0000255" key="1"/>
<evidence type="ECO:0000305" key="2"/>
<accession>O31845</accession>
<name>YOZB_BACSU</name>
<organism>
    <name type="scientific">Bacillus subtilis (strain 168)</name>
    <dbReference type="NCBI Taxonomy" id="224308"/>
    <lineage>
        <taxon>Bacteria</taxon>
        <taxon>Bacillati</taxon>
        <taxon>Bacillota</taxon>
        <taxon>Bacilli</taxon>
        <taxon>Bacillales</taxon>
        <taxon>Bacillaceae</taxon>
        <taxon>Bacillus</taxon>
    </lineage>
</organism>